<accession>P37809</accession>
<comment type="function">
    <text evidence="1">Produces ATP from ADP in the presence of a proton gradient across the membrane. The catalytic sites are hosted primarily by the beta subunits.</text>
</comment>
<comment type="catalytic activity">
    <reaction evidence="1">
        <text>ATP + H2O + 4 H(+)(in) = ADP + phosphate + 5 H(+)(out)</text>
        <dbReference type="Rhea" id="RHEA:57720"/>
        <dbReference type="ChEBI" id="CHEBI:15377"/>
        <dbReference type="ChEBI" id="CHEBI:15378"/>
        <dbReference type="ChEBI" id="CHEBI:30616"/>
        <dbReference type="ChEBI" id="CHEBI:43474"/>
        <dbReference type="ChEBI" id="CHEBI:456216"/>
        <dbReference type="EC" id="7.1.2.2"/>
    </reaction>
</comment>
<comment type="subunit">
    <text evidence="1 2 4">F-type ATPases have 2 components, CF(1) - the catalytic core - and CF(0) - the membrane proton channel. CF(1) has five subunits: alpha(3), beta(3), gamma(1), delta(1), epsilon(1). CF(0) has three main subunits: a(1), b(2) and c(9-12). The alpha and beta chains form an alternating ring which encloses part of the gamma chain. CF(1) is attached to CF(0) by a central stalk formed by the gamma and epsilon chains, while a peripheral stalk is formed by the delta and b chains (Probable). The F(1)F(0) complex interacts with SpoIIIJ and YqjG; YqgA is found in the same complex.</text>
</comment>
<comment type="subcellular location">
    <subcellularLocation>
        <location evidence="1 3">Cell membrane</location>
        <topology evidence="1">Peripheral membrane protein</topology>
    </subcellularLocation>
    <subcellularLocation>
        <location evidence="3">Membrane raft</location>
        <topology evidence="4">Peripheral membrane protein</topology>
    </subcellularLocation>
    <text evidence="3">Present in detergent-resistant membrane (DRM) fractions that may be equivalent to eukaryotic membrane rafts; these rafts include proteins involved in signaling, molecule trafficking and protein secretion.</text>
</comment>
<comment type="similarity">
    <text evidence="1">Belongs to the ATPase alpha/beta chains family.</text>
</comment>
<name>ATPB_BACSU</name>
<evidence type="ECO:0000255" key="1">
    <source>
        <dbReference type="HAMAP-Rule" id="MF_01347"/>
    </source>
</evidence>
<evidence type="ECO:0000269" key="2">
    <source>
    </source>
</evidence>
<evidence type="ECO:0000269" key="3">
    <source>
    </source>
</evidence>
<evidence type="ECO:0000305" key="4"/>
<reference key="1">
    <citation type="journal article" date="1994" name="J. Bacteriol.">
        <title>Bacillus subtilis F0F1 ATPase: DNA sequence of the atp operon and characterization of atp mutants.</title>
        <authorList>
            <person name="Santana M."/>
            <person name="Ionescu M.S."/>
            <person name="Vertes A."/>
            <person name="Longin R."/>
            <person name="Kunst F."/>
            <person name="Danchin A."/>
            <person name="Glaser P."/>
        </authorList>
    </citation>
    <scope>NUCLEOTIDE SEQUENCE [GENOMIC DNA]</scope>
    <source>
        <strain>168</strain>
    </source>
</reference>
<reference key="2">
    <citation type="journal article" date="1997" name="Nature">
        <title>The complete genome sequence of the Gram-positive bacterium Bacillus subtilis.</title>
        <authorList>
            <person name="Kunst F."/>
            <person name="Ogasawara N."/>
            <person name="Moszer I."/>
            <person name="Albertini A.M."/>
            <person name="Alloni G."/>
            <person name="Azevedo V."/>
            <person name="Bertero M.G."/>
            <person name="Bessieres P."/>
            <person name="Bolotin A."/>
            <person name="Borchert S."/>
            <person name="Borriss R."/>
            <person name="Boursier L."/>
            <person name="Brans A."/>
            <person name="Braun M."/>
            <person name="Brignell S.C."/>
            <person name="Bron S."/>
            <person name="Brouillet S."/>
            <person name="Bruschi C.V."/>
            <person name="Caldwell B."/>
            <person name="Capuano V."/>
            <person name="Carter N.M."/>
            <person name="Choi S.-K."/>
            <person name="Codani J.-J."/>
            <person name="Connerton I.F."/>
            <person name="Cummings N.J."/>
            <person name="Daniel R.A."/>
            <person name="Denizot F."/>
            <person name="Devine K.M."/>
            <person name="Duesterhoeft A."/>
            <person name="Ehrlich S.D."/>
            <person name="Emmerson P.T."/>
            <person name="Entian K.-D."/>
            <person name="Errington J."/>
            <person name="Fabret C."/>
            <person name="Ferrari E."/>
            <person name="Foulger D."/>
            <person name="Fritz C."/>
            <person name="Fujita M."/>
            <person name="Fujita Y."/>
            <person name="Fuma S."/>
            <person name="Galizzi A."/>
            <person name="Galleron N."/>
            <person name="Ghim S.-Y."/>
            <person name="Glaser P."/>
            <person name="Goffeau A."/>
            <person name="Golightly E.J."/>
            <person name="Grandi G."/>
            <person name="Guiseppi G."/>
            <person name="Guy B.J."/>
            <person name="Haga K."/>
            <person name="Haiech J."/>
            <person name="Harwood C.R."/>
            <person name="Henaut A."/>
            <person name="Hilbert H."/>
            <person name="Holsappel S."/>
            <person name="Hosono S."/>
            <person name="Hullo M.-F."/>
            <person name="Itaya M."/>
            <person name="Jones L.-M."/>
            <person name="Joris B."/>
            <person name="Karamata D."/>
            <person name="Kasahara Y."/>
            <person name="Klaerr-Blanchard M."/>
            <person name="Klein C."/>
            <person name="Kobayashi Y."/>
            <person name="Koetter P."/>
            <person name="Koningstein G."/>
            <person name="Krogh S."/>
            <person name="Kumano M."/>
            <person name="Kurita K."/>
            <person name="Lapidus A."/>
            <person name="Lardinois S."/>
            <person name="Lauber J."/>
            <person name="Lazarevic V."/>
            <person name="Lee S.-M."/>
            <person name="Levine A."/>
            <person name="Liu H."/>
            <person name="Masuda S."/>
            <person name="Mauel C."/>
            <person name="Medigue C."/>
            <person name="Medina N."/>
            <person name="Mellado R.P."/>
            <person name="Mizuno M."/>
            <person name="Moestl D."/>
            <person name="Nakai S."/>
            <person name="Noback M."/>
            <person name="Noone D."/>
            <person name="O'Reilly M."/>
            <person name="Ogawa K."/>
            <person name="Ogiwara A."/>
            <person name="Oudega B."/>
            <person name="Park S.-H."/>
            <person name="Parro V."/>
            <person name="Pohl T.M."/>
            <person name="Portetelle D."/>
            <person name="Porwollik S."/>
            <person name="Prescott A.M."/>
            <person name="Presecan E."/>
            <person name="Pujic P."/>
            <person name="Purnelle B."/>
            <person name="Rapoport G."/>
            <person name="Rey M."/>
            <person name="Reynolds S."/>
            <person name="Rieger M."/>
            <person name="Rivolta C."/>
            <person name="Rocha E."/>
            <person name="Roche B."/>
            <person name="Rose M."/>
            <person name="Sadaie Y."/>
            <person name="Sato T."/>
            <person name="Scanlan E."/>
            <person name="Schleich S."/>
            <person name="Schroeter R."/>
            <person name="Scoffone F."/>
            <person name="Sekiguchi J."/>
            <person name="Sekowska A."/>
            <person name="Seror S.J."/>
            <person name="Serror P."/>
            <person name="Shin B.-S."/>
            <person name="Soldo B."/>
            <person name="Sorokin A."/>
            <person name="Tacconi E."/>
            <person name="Takagi T."/>
            <person name="Takahashi H."/>
            <person name="Takemaru K."/>
            <person name="Takeuchi M."/>
            <person name="Tamakoshi A."/>
            <person name="Tanaka T."/>
            <person name="Terpstra P."/>
            <person name="Tognoni A."/>
            <person name="Tosato V."/>
            <person name="Uchiyama S."/>
            <person name="Vandenbol M."/>
            <person name="Vannier F."/>
            <person name="Vassarotti A."/>
            <person name="Viari A."/>
            <person name="Wambutt R."/>
            <person name="Wedler E."/>
            <person name="Wedler H."/>
            <person name="Weitzenegger T."/>
            <person name="Winters P."/>
            <person name="Wipat A."/>
            <person name="Yamamoto H."/>
            <person name="Yamane K."/>
            <person name="Yasumoto K."/>
            <person name="Yata K."/>
            <person name="Yoshida K."/>
            <person name="Yoshikawa H.-F."/>
            <person name="Zumstein E."/>
            <person name="Yoshikawa H."/>
            <person name="Danchin A."/>
        </authorList>
    </citation>
    <scope>NUCLEOTIDE SEQUENCE [LARGE SCALE GENOMIC DNA]</scope>
    <source>
        <strain>168</strain>
    </source>
</reference>
<reference key="3">
    <citation type="journal article" date="1997" name="Electrophoresis">
        <title>First steps from a two-dimensional protein index towards a response-regulation map for Bacillus subtilis.</title>
        <authorList>
            <person name="Antelmann H."/>
            <person name="Bernhardt J."/>
            <person name="Schmid R."/>
            <person name="Mach H."/>
            <person name="Voelker U."/>
            <person name="Hecker M."/>
        </authorList>
    </citation>
    <scope>PROTEIN SEQUENCE OF 1-11</scope>
    <source>
        <strain>168 / IS58</strain>
    </source>
</reference>
<reference key="4">
    <citation type="journal article" date="2009" name="J. Bacteriol.">
        <title>Bacillus subtilis SpoIIIJ and YqjG function in membrane protein biogenesis.</title>
        <authorList>
            <person name="Saller M.J."/>
            <person name="Fusetti F."/>
            <person name="Driessen A.J."/>
        </authorList>
    </citation>
    <scope>IDENTIFICATION BY MASS SPECTROMETRY</scope>
    <scope>INTERACTION WITH SPOIIIJ AND YQJG</scope>
    <source>
        <strain>168</strain>
    </source>
</reference>
<reference key="5">
    <citation type="journal article" date="2010" name="Genes Dev.">
        <title>Functional microdomains in bacterial membranes.</title>
        <authorList>
            <person name="Lopez D."/>
            <person name="Kolter R."/>
        </authorList>
    </citation>
    <scope>SUBCELLULAR LOCATION</scope>
    <source>
        <strain>168 / Marburg / ATCC 6051 / DSM 10 / JCM 1465 / NBRC 13719 / NCIMB 3610 / NRRL NRS-744 / VKM B-501</strain>
    </source>
</reference>
<dbReference type="EC" id="7.1.2.2" evidence="1"/>
<dbReference type="EMBL" id="Z28592">
    <property type="protein sequence ID" value="CAA82260.1"/>
    <property type="molecule type" value="Genomic_DNA"/>
</dbReference>
<dbReference type="EMBL" id="AL009126">
    <property type="protein sequence ID" value="CAB15698.1"/>
    <property type="molecule type" value="Genomic_DNA"/>
</dbReference>
<dbReference type="PIR" id="I40368">
    <property type="entry name" value="I40368"/>
</dbReference>
<dbReference type="RefSeq" id="NP_391562.1">
    <property type="nucleotide sequence ID" value="NC_000964.3"/>
</dbReference>
<dbReference type="RefSeq" id="WP_003227686.1">
    <property type="nucleotide sequence ID" value="NZ_OZ025638.1"/>
</dbReference>
<dbReference type="SMR" id="P37809"/>
<dbReference type="FunCoup" id="P37809">
    <property type="interactions" value="508"/>
</dbReference>
<dbReference type="IntAct" id="P37809">
    <property type="interactions" value="3"/>
</dbReference>
<dbReference type="MINT" id="P37809"/>
<dbReference type="STRING" id="224308.BSU36810"/>
<dbReference type="jPOST" id="P37809"/>
<dbReference type="PaxDb" id="224308-BSU36810"/>
<dbReference type="EnsemblBacteria" id="CAB15698">
    <property type="protein sequence ID" value="CAB15698"/>
    <property type="gene ID" value="BSU_36810"/>
</dbReference>
<dbReference type="GeneID" id="936992"/>
<dbReference type="KEGG" id="bsu:BSU36810"/>
<dbReference type="PATRIC" id="fig|224308.179.peg.3987"/>
<dbReference type="eggNOG" id="COG0055">
    <property type="taxonomic scope" value="Bacteria"/>
</dbReference>
<dbReference type="InParanoid" id="P37809"/>
<dbReference type="OrthoDB" id="9801639at2"/>
<dbReference type="PhylomeDB" id="P37809"/>
<dbReference type="BioCyc" id="BSUB:BSU36810-MONOMER"/>
<dbReference type="SABIO-RK" id="P37809"/>
<dbReference type="Proteomes" id="UP000001570">
    <property type="component" value="Chromosome"/>
</dbReference>
<dbReference type="GO" id="GO:0045121">
    <property type="term" value="C:membrane raft"/>
    <property type="evidence" value="ECO:0007669"/>
    <property type="project" value="UniProtKB-SubCell"/>
</dbReference>
<dbReference type="GO" id="GO:0005886">
    <property type="term" value="C:plasma membrane"/>
    <property type="evidence" value="ECO:0007669"/>
    <property type="project" value="UniProtKB-SubCell"/>
</dbReference>
<dbReference type="GO" id="GO:0045259">
    <property type="term" value="C:proton-transporting ATP synthase complex"/>
    <property type="evidence" value="ECO:0007669"/>
    <property type="project" value="UniProtKB-KW"/>
</dbReference>
<dbReference type="GO" id="GO:0005524">
    <property type="term" value="F:ATP binding"/>
    <property type="evidence" value="ECO:0007669"/>
    <property type="project" value="UniProtKB-UniRule"/>
</dbReference>
<dbReference type="GO" id="GO:0016887">
    <property type="term" value="F:ATP hydrolysis activity"/>
    <property type="evidence" value="ECO:0007669"/>
    <property type="project" value="InterPro"/>
</dbReference>
<dbReference type="GO" id="GO:0046933">
    <property type="term" value="F:proton-transporting ATP synthase activity, rotational mechanism"/>
    <property type="evidence" value="ECO:0007669"/>
    <property type="project" value="UniProtKB-UniRule"/>
</dbReference>
<dbReference type="CDD" id="cd18110">
    <property type="entry name" value="ATP-synt_F1_beta_C"/>
    <property type="match status" value="1"/>
</dbReference>
<dbReference type="CDD" id="cd18115">
    <property type="entry name" value="ATP-synt_F1_beta_N"/>
    <property type="match status" value="1"/>
</dbReference>
<dbReference type="CDD" id="cd01133">
    <property type="entry name" value="F1-ATPase_beta_CD"/>
    <property type="match status" value="1"/>
</dbReference>
<dbReference type="FunFam" id="1.10.1140.10:FF:000001">
    <property type="entry name" value="ATP synthase subunit beta"/>
    <property type="match status" value="1"/>
</dbReference>
<dbReference type="FunFam" id="2.40.10.170:FF:000005">
    <property type="entry name" value="ATP synthase subunit beta"/>
    <property type="match status" value="1"/>
</dbReference>
<dbReference type="FunFam" id="3.40.50.300:FF:000004">
    <property type="entry name" value="ATP synthase subunit beta"/>
    <property type="match status" value="1"/>
</dbReference>
<dbReference type="Gene3D" id="2.40.10.170">
    <property type="match status" value="1"/>
</dbReference>
<dbReference type="Gene3D" id="1.10.1140.10">
    <property type="entry name" value="Bovine Mitochondrial F1-atpase, Atp Synthase Beta Chain, Chain D, domain 3"/>
    <property type="match status" value="1"/>
</dbReference>
<dbReference type="Gene3D" id="3.40.50.300">
    <property type="entry name" value="P-loop containing nucleotide triphosphate hydrolases"/>
    <property type="match status" value="1"/>
</dbReference>
<dbReference type="HAMAP" id="MF_01347">
    <property type="entry name" value="ATP_synth_beta_bact"/>
    <property type="match status" value="1"/>
</dbReference>
<dbReference type="InterPro" id="IPR003593">
    <property type="entry name" value="AAA+_ATPase"/>
</dbReference>
<dbReference type="InterPro" id="IPR055190">
    <property type="entry name" value="ATP-synt_VA_C"/>
</dbReference>
<dbReference type="InterPro" id="IPR005722">
    <property type="entry name" value="ATP_synth_F1_bsu"/>
</dbReference>
<dbReference type="InterPro" id="IPR020003">
    <property type="entry name" value="ATPase_a/bsu_AS"/>
</dbReference>
<dbReference type="InterPro" id="IPR050053">
    <property type="entry name" value="ATPase_alpha/beta_chains"/>
</dbReference>
<dbReference type="InterPro" id="IPR004100">
    <property type="entry name" value="ATPase_F1/V1/A1_a/bsu_N"/>
</dbReference>
<dbReference type="InterPro" id="IPR036121">
    <property type="entry name" value="ATPase_F1/V1/A1_a/bsu_N_sf"/>
</dbReference>
<dbReference type="InterPro" id="IPR000194">
    <property type="entry name" value="ATPase_F1/V1/A1_a/bsu_nucl-bd"/>
</dbReference>
<dbReference type="InterPro" id="IPR024034">
    <property type="entry name" value="ATPase_F1/V1_b/a_C"/>
</dbReference>
<dbReference type="InterPro" id="IPR027417">
    <property type="entry name" value="P-loop_NTPase"/>
</dbReference>
<dbReference type="NCBIfam" id="TIGR01039">
    <property type="entry name" value="atpD"/>
    <property type="match status" value="1"/>
</dbReference>
<dbReference type="PANTHER" id="PTHR15184">
    <property type="entry name" value="ATP SYNTHASE"/>
    <property type="match status" value="1"/>
</dbReference>
<dbReference type="PANTHER" id="PTHR15184:SF71">
    <property type="entry name" value="ATP SYNTHASE SUBUNIT BETA, MITOCHONDRIAL"/>
    <property type="match status" value="1"/>
</dbReference>
<dbReference type="Pfam" id="PF00006">
    <property type="entry name" value="ATP-synt_ab"/>
    <property type="match status" value="1"/>
</dbReference>
<dbReference type="Pfam" id="PF02874">
    <property type="entry name" value="ATP-synt_ab_N"/>
    <property type="match status" value="1"/>
</dbReference>
<dbReference type="Pfam" id="PF22919">
    <property type="entry name" value="ATP-synt_VA_C"/>
    <property type="match status" value="1"/>
</dbReference>
<dbReference type="SMART" id="SM00382">
    <property type="entry name" value="AAA"/>
    <property type="match status" value="1"/>
</dbReference>
<dbReference type="SUPFAM" id="SSF47917">
    <property type="entry name" value="C-terminal domain of alpha and beta subunits of F1 ATP synthase"/>
    <property type="match status" value="1"/>
</dbReference>
<dbReference type="SUPFAM" id="SSF50615">
    <property type="entry name" value="N-terminal domain of alpha and beta subunits of F1 ATP synthase"/>
    <property type="match status" value="1"/>
</dbReference>
<dbReference type="SUPFAM" id="SSF52540">
    <property type="entry name" value="P-loop containing nucleoside triphosphate hydrolases"/>
    <property type="match status" value="1"/>
</dbReference>
<dbReference type="PROSITE" id="PS00152">
    <property type="entry name" value="ATPASE_ALPHA_BETA"/>
    <property type="match status" value="1"/>
</dbReference>
<proteinExistence type="evidence at protein level"/>
<sequence length="473" mass="51420">MKKGRVSQVLGPVVDVRFEDGHLPEIYNAIKISQPAASENEVGIDLTLEVALHLGDDTVRTIAMASTDGVQRGMEAVDTGAPISVPVGDVTLGRVFNVLGENIDLNEPVPADAKKDPIHRQAPSFDQLSTEVEILETGIKVVDLLAPYIKGGKIGLFGGAGVGKTVLIQELINNIAQEHGGISVFAGVGERTREGNDLFYEMSDSGVINKTAMVFGQMNEPPGARMRVALTGLTMAEHFRDVQGQDVLFFIDNIFRFTQAGSEVSALLGRMPSAVGYQPTLATEMGQLQERITSTNVGSVTSIQAIYVPADDYTDPAPATTFAHLDATTNLERKLTEMGIYPAVDPLASTSRALAPEIVGEEHYAVAREVQSTLQRYKELQDIIAILGMDELGEEDKLVVHRARRIQFFLSQNFHVAEQFTGQKGSYVPVKETVQGFKEILAGKYDHLPEDAFRLVGRIEEVVEKAKEMGVEV</sequence>
<protein>
    <recommendedName>
        <fullName evidence="1">ATP synthase subunit beta</fullName>
        <ecNumber evidence="1">7.1.2.2</ecNumber>
    </recommendedName>
    <alternativeName>
        <fullName evidence="1">ATP synthase F1 sector subunit beta</fullName>
    </alternativeName>
    <alternativeName>
        <fullName evidence="1">F-ATPase subunit beta</fullName>
    </alternativeName>
    <alternativeName>
        <fullName>Vegetative protein 31</fullName>
        <shortName>VEG31</shortName>
    </alternativeName>
</protein>
<keyword id="KW-0066">ATP synthesis</keyword>
<keyword id="KW-0067">ATP-binding</keyword>
<keyword id="KW-1003">Cell membrane</keyword>
<keyword id="KW-0139">CF(1)</keyword>
<keyword id="KW-0903">Direct protein sequencing</keyword>
<keyword id="KW-0375">Hydrogen ion transport</keyword>
<keyword id="KW-0406">Ion transport</keyword>
<keyword id="KW-0472">Membrane</keyword>
<keyword id="KW-0547">Nucleotide-binding</keyword>
<keyword id="KW-1185">Reference proteome</keyword>
<keyword id="KW-1278">Translocase</keyword>
<keyword id="KW-0813">Transport</keyword>
<organism>
    <name type="scientific">Bacillus subtilis (strain 168)</name>
    <dbReference type="NCBI Taxonomy" id="224308"/>
    <lineage>
        <taxon>Bacteria</taxon>
        <taxon>Bacillati</taxon>
        <taxon>Bacillota</taxon>
        <taxon>Bacilli</taxon>
        <taxon>Bacillales</taxon>
        <taxon>Bacillaceae</taxon>
        <taxon>Bacillus</taxon>
    </lineage>
</organism>
<gene>
    <name evidence="1" type="primary">atpD</name>
    <name type="ordered locus">BSU36810</name>
</gene>
<feature type="chain" id="PRO_0000144425" description="ATP synthase subunit beta">
    <location>
        <begin position="1"/>
        <end position="473"/>
    </location>
</feature>
<feature type="binding site" evidence="1">
    <location>
        <begin position="158"/>
        <end position="165"/>
    </location>
    <ligand>
        <name>ATP</name>
        <dbReference type="ChEBI" id="CHEBI:30616"/>
    </ligand>
</feature>